<name>HBB_CAICR</name>
<proteinExistence type="evidence at protein level"/>
<feature type="chain" id="PRO_0000052899" description="Hemoglobin subunit beta">
    <location>
        <begin position="1"/>
        <end position="146"/>
    </location>
</feature>
<feature type="domain" description="Globin" evidence="1">
    <location>
        <begin position="2"/>
        <end position="146"/>
    </location>
</feature>
<feature type="binding site" description="distal binding residue">
    <location>
        <position position="63"/>
    </location>
    <ligand>
        <name>heme b</name>
        <dbReference type="ChEBI" id="CHEBI:60344"/>
    </ligand>
    <ligandPart>
        <name>Fe</name>
        <dbReference type="ChEBI" id="CHEBI:18248"/>
    </ligandPart>
</feature>
<feature type="binding site" description="proximal binding residue">
    <location>
        <position position="92"/>
    </location>
    <ligand>
        <name>heme b</name>
        <dbReference type="ChEBI" id="CHEBI:60344"/>
    </ligand>
    <ligandPart>
        <name>Fe</name>
        <dbReference type="ChEBI" id="CHEBI:18248"/>
    </ligandPart>
</feature>
<reference key="1">
    <citation type="journal article" date="1981" name="Hoppe-Seyler's Z. Physiol. Chem.">
        <title>Direct reciprocal allosteric interaction of oxygen and hydrogen carbonate sequence of the haemoglobins of the Caiman (Caiman crocodylus), the Nile crocodile (Crocodylus niloticus) and the Mississippi crocodile (Alligator mississippiensis).</title>
        <authorList>
            <person name="Leclercq F."/>
            <person name="Schnek A.G."/>
            <person name="Braunitzer G."/>
            <person name="Stangl A."/>
            <person name="Schrank B."/>
        </authorList>
    </citation>
    <scope>PROTEIN SEQUENCE</scope>
</reference>
<gene>
    <name type="primary">HBB</name>
</gene>
<comment type="function">
    <text>Involved in oxygen transport from the lung to the various peripheral tissues.</text>
</comment>
<comment type="subunit">
    <text>Heterotetramer of two alpha chains and two beta chains.</text>
</comment>
<comment type="tissue specificity">
    <text>Red blood cells.</text>
</comment>
<comment type="similarity">
    <text evidence="1">Belongs to the globin family.</text>
</comment>
<accession>P02131</accession>
<organism>
    <name type="scientific">Caiman crocodilus</name>
    <name type="common">Spectacled caiman</name>
    <name type="synonym">Caiman sclerops</name>
    <dbReference type="NCBI Taxonomy" id="8499"/>
    <lineage>
        <taxon>Eukaryota</taxon>
        <taxon>Metazoa</taxon>
        <taxon>Chordata</taxon>
        <taxon>Craniata</taxon>
        <taxon>Vertebrata</taxon>
        <taxon>Euteleostomi</taxon>
        <taxon>Archelosauria</taxon>
        <taxon>Archosauria</taxon>
        <taxon>Crocodylia</taxon>
        <taxon>Alligatoridae</taxon>
        <taxon>Caimaninae</taxon>
        <taxon>Caiman</taxon>
    </lineage>
</organism>
<keyword id="KW-0903">Direct protein sequencing</keyword>
<keyword id="KW-0349">Heme</keyword>
<keyword id="KW-0408">Iron</keyword>
<keyword id="KW-0479">Metal-binding</keyword>
<keyword id="KW-0561">Oxygen transport</keyword>
<keyword id="KW-0813">Transport</keyword>
<dbReference type="PIR" id="A02451">
    <property type="entry name" value="HBCQ"/>
</dbReference>
<dbReference type="SMR" id="P02131"/>
<dbReference type="GO" id="GO:0072562">
    <property type="term" value="C:blood microparticle"/>
    <property type="evidence" value="ECO:0007669"/>
    <property type="project" value="TreeGrafter"/>
</dbReference>
<dbReference type="GO" id="GO:0031838">
    <property type="term" value="C:haptoglobin-hemoglobin complex"/>
    <property type="evidence" value="ECO:0007669"/>
    <property type="project" value="TreeGrafter"/>
</dbReference>
<dbReference type="GO" id="GO:0005833">
    <property type="term" value="C:hemoglobin complex"/>
    <property type="evidence" value="ECO:0007669"/>
    <property type="project" value="InterPro"/>
</dbReference>
<dbReference type="GO" id="GO:0031720">
    <property type="term" value="F:haptoglobin binding"/>
    <property type="evidence" value="ECO:0007669"/>
    <property type="project" value="TreeGrafter"/>
</dbReference>
<dbReference type="GO" id="GO:0020037">
    <property type="term" value="F:heme binding"/>
    <property type="evidence" value="ECO:0007669"/>
    <property type="project" value="InterPro"/>
</dbReference>
<dbReference type="GO" id="GO:0046872">
    <property type="term" value="F:metal ion binding"/>
    <property type="evidence" value="ECO:0007669"/>
    <property type="project" value="UniProtKB-KW"/>
</dbReference>
<dbReference type="GO" id="GO:0043177">
    <property type="term" value="F:organic acid binding"/>
    <property type="evidence" value="ECO:0007669"/>
    <property type="project" value="TreeGrafter"/>
</dbReference>
<dbReference type="GO" id="GO:0019825">
    <property type="term" value="F:oxygen binding"/>
    <property type="evidence" value="ECO:0007669"/>
    <property type="project" value="InterPro"/>
</dbReference>
<dbReference type="GO" id="GO:0005344">
    <property type="term" value="F:oxygen carrier activity"/>
    <property type="evidence" value="ECO:0007669"/>
    <property type="project" value="UniProtKB-KW"/>
</dbReference>
<dbReference type="GO" id="GO:0004601">
    <property type="term" value="F:peroxidase activity"/>
    <property type="evidence" value="ECO:0007669"/>
    <property type="project" value="TreeGrafter"/>
</dbReference>
<dbReference type="GO" id="GO:0042744">
    <property type="term" value="P:hydrogen peroxide catabolic process"/>
    <property type="evidence" value="ECO:0007669"/>
    <property type="project" value="TreeGrafter"/>
</dbReference>
<dbReference type="CDD" id="cd08925">
    <property type="entry name" value="Hb-beta-like"/>
    <property type="match status" value="1"/>
</dbReference>
<dbReference type="Gene3D" id="1.10.490.10">
    <property type="entry name" value="Globins"/>
    <property type="match status" value="1"/>
</dbReference>
<dbReference type="InterPro" id="IPR000971">
    <property type="entry name" value="Globin"/>
</dbReference>
<dbReference type="InterPro" id="IPR009050">
    <property type="entry name" value="Globin-like_sf"/>
</dbReference>
<dbReference type="InterPro" id="IPR012292">
    <property type="entry name" value="Globin/Proto"/>
</dbReference>
<dbReference type="InterPro" id="IPR002337">
    <property type="entry name" value="Hemoglobin_b"/>
</dbReference>
<dbReference type="InterPro" id="IPR050056">
    <property type="entry name" value="Hemoglobin_oxygen_transport"/>
</dbReference>
<dbReference type="PANTHER" id="PTHR11442">
    <property type="entry name" value="HEMOGLOBIN FAMILY MEMBER"/>
    <property type="match status" value="1"/>
</dbReference>
<dbReference type="PANTHER" id="PTHR11442:SF7">
    <property type="entry name" value="HEMOGLOBIN SUBUNIT EPSILON"/>
    <property type="match status" value="1"/>
</dbReference>
<dbReference type="Pfam" id="PF00042">
    <property type="entry name" value="Globin"/>
    <property type="match status" value="1"/>
</dbReference>
<dbReference type="PRINTS" id="PR00814">
    <property type="entry name" value="BETAHAEM"/>
</dbReference>
<dbReference type="SUPFAM" id="SSF46458">
    <property type="entry name" value="Globin-like"/>
    <property type="match status" value="1"/>
</dbReference>
<dbReference type="PROSITE" id="PS01033">
    <property type="entry name" value="GLOBIN"/>
    <property type="match status" value="1"/>
</dbReference>
<protein>
    <recommendedName>
        <fullName>Hemoglobin subunit beta</fullName>
    </recommendedName>
    <alternativeName>
        <fullName>Beta-globin</fullName>
    </alternativeName>
    <alternativeName>
        <fullName>Hemoglobin beta chain</fullName>
    </alternativeName>
</protein>
<sequence length="146" mass="16718">SPFSAHEEKLIVDLWAKVDVASCGGDALSRMLIIYPWKRRYFEHFGKLSTDQDVLHNEKIREHGKKVLASFGEAVKHLDNIKGHFAHLSKLHFEKFHVDCENFKLLGDIIIVVLGMHHPKDFTLQTHAAFQKLVRHVAAALSAEYH</sequence>
<evidence type="ECO:0000255" key="1">
    <source>
        <dbReference type="PROSITE-ProRule" id="PRU00238"/>
    </source>
</evidence>